<organism>
    <name type="scientific">Invertebrate iridescent virus 6</name>
    <name type="common">IIV-6</name>
    <name type="synonym">Chilo iridescent virus</name>
    <dbReference type="NCBI Taxonomy" id="176652"/>
    <lineage>
        <taxon>Viruses</taxon>
        <taxon>Varidnaviria</taxon>
        <taxon>Bamfordvirae</taxon>
        <taxon>Nucleocytoviricota</taxon>
        <taxon>Megaviricetes</taxon>
        <taxon>Pimascovirales</taxon>
        <taxon>Iridoviridae</taxon>
        <taxon>Betairidovirinae</taxon>
        <taxon>Iridovirus</taxon>
    </lineage>
</organism>
<sequence length="442" mass="50758">MSCKININEIDPSVLSKLKSKAVLKIDNNGKPDNVILTRLINETAYIPFSMAKNFNLSIPLRNKFPAISTKFKGELRDNQMIVRREAIDILEKNHSVIISCFTGFGKTIGAINLACKLRLKTLIIVTRVVLMNQWKESILKFCESENKTIPIVEIISSNSKDEYVMCNFAIINAINIPKMEQGFLESFGTVIVDEVHLVMARKTFRSLLYVTPRYLIALSATSYRSDGLDALFPIFFGKEKIIRELNRKHVIYRVDTLFKPQVKYGINGKMDWNALLEDQASNENRNKLIVQVVKNNPERTFLILVKRIKQGEWLAKEIEKECFNRVDHLLNNLSIDDEQKEPKHVATLFGSNQKFDKNCKVLIGTSAKIGTGFDFDKLDTLLLAADVVEYYIQFIGRIMRKDDVNPIIFDLVDNNKTLQKHYSERLKVYKKHGGIVKNYKL</sequence>
<gene>
    <name type="ORF">IIV6-161L</name>
</gene>
<keyword id="KW-0067">ATP-binding</keyword>
<keyword id="KW-0347">Helicase</keyword>
<keyword id="KW-0378">Hydrolase</keyword>
<keyword id="KW-0547">Nucleotide-binding</keyword>
<keyword id="KW-1185">Reference proteome</keyword>
<accession>O55759</accession>
<evidence type="ECO:0000255" key="1">
    <source>
        <dbReference type="PROSITE-ProRule" id="PRU00541"/>
    </source>
</evidence>
<evidence type="ECO:0000305" key="2"/>
<organismHost>
    <name type="scientific">Acheta domesticus</name>
    <name type="common">House cricket</name>
    <dbReference type="NCBI Taxonomy" id="6997"/>
</organismHost>
<organismHost>
    <name type="scientific">Chilo suppressalis</name>
    <name type="common">Asiatic rice borer moth</name>
    <dbReference type="NCBI Taxonomy" id="168631"/>
</organismHost>
<organismHost>
    <name type="scientific">Gryllus bimaculatus</name>
    <name type="common">Two-spotted cricket</name>
    <dbReference type="NCBI Taxonomy" id="6999"/>
</organismHost>
<organismHost>
    <name type="scientific">Gryllus campestris</name>
    <dbReference type="NCBI Taxonomy" id="58607"/>
</organismHost>
<organismHost>
    <name type="scientific">Spodoptera frugiperda</name>
    <name type="common">Fall armyworm</name>
    <dbReference type="NCBI Taxonomy" id="7108"/>
</organismHost>
<proteinExistence type="inferred from homology"/>
<feature type="chain" id="PRO_0000376958" description="Putative helicase 161L">
    <location>
        <begin position="1"/>
        <end position="442"/>
    </location>
</feature>
<feature type="domain" description="Helicase ATP-binding" evidence="1">
    <location>
        <begin position="88"/>
        <end position="241"/>
    </location>
</feature>
<feature type="short sequence motif" description="DEAH box">
    <location>
        <begin position="194"/>
        <end position="197"/>
    </location>
</feature>
<feature type="binding site" evidence="1">
    <location>
        <begin position="101"/>
        <end position="108"/>
    </location>
    <ligand>
        <name>ATP</name>
        <dbReference type="ChEBI" id="CHEBI:30616"/>
    </ligand>
</feature>
<dbReference type="EC" id="3.6.4.-"/>
<dbReference type="EMBL" id="AF303741">
    <property type="protein sequence ID" value="AAB94470.1"/>
    <property type="molecule type" value="Genomic_DNA"/>
</dbReference>
<dbReference type="PIR" id="T03172">
    <property type="entry name" value="T03172"/>
</dbReference>
<dbReference type="RefSeq" id="NP_149624.1">
    <property type="nucleotide sequence ID" value="NC_003038.1"/>
</dbReference>
<dbReference type="KEGG" id="vg:1733252"/>
<dbReference type="OrthoDB" id="4131at10239"/>
<dbReference type="Proteomes" id="UP000001359">
    <property type="component" value="Genome"/>
</dbReference>
<dbReference type="GO" id="GO:0005524">
    <property type="term" value="F:ATP binding"/>
    <property type="evidence" value="ECO:0007669"/>
    <property type="project" value="UniProtKB-KW"/>
</dbReference>
<dbReference type="GO" id="GO:0003677">
    <property type="term" value="F:DNA binding"/>
    <property type="evidence" value="ECO:0007669"/>
    <property type="project" value="InterPro"/>
</dbReference>
<dbReference type="GO" id="GO:0004386">
    <property type="term" value="F:helicase activity"/>
    <property type="evidence" value="ECO:0007669"/>
    <property type="project" value="UniProtKB-KW"/>
</dbReference>
<dbReference type="GO" id="GO:0016787">
    <property type="term" value="F:hydrolase activity"/>
    <property type="evidence" value="ECO:0007669"/>
    <property type="project" value="UniProtKB-KW"/>
</dbReference>
<dbReference type="CDD" id="cd18785">
    <property type="entry name" value="SF2_C"/>
    <property type="match status" value="1"/>
</dbReference>
<dbReference type="Gene3D" id="3.40.50.300">
    <property type="entry name" value="P-loop containing nucleotide triphosphate hydrolases"/>
    <property type="match status" value="2"/>
</dbReference>
<dbReference type="InterPro" id="IPR050615">
    <property type="entry name" value="ATP-dep_DNA_Helicase"/>
</dbReference>
<dbReference type="InterPro" id="IPR006935">
    <property type="entry name" value="Helicase/UvrB_N"/>
</dbReference>
<dbReference type="InterPro" id="IPR014001">
    <property type="entry name" value="Helicase_ATP-bd"/>
</dbReference>
<dbReference type="InterPro" id="IPR027417">
    <property type="entry name" value="P-loop_NTPase"/>
</dbReference>
<dbReference type="PANTHER" id="PTHR11274:SF0">
    <property type="entry name" value="GENERAL TRANSCRIPTION AND DNA REPAIR FACTOR IIH HELICASE SUBUNIT XPB"/>
    <property type="match status" value="1"/>
</dbReference>
<dbReference type="PANTHER" id="PTHR11274">
    <property type="entry name" value="RAD25/XP-B DNA REPAIR HELICASE"/>
    <property type="match status" value="1"/>
</dbReference>
<dbReference type="Pfam" id="PF04851">
    <property type="entry name" value="ResIII"/>
    <property type="match status" value="1"/>
</dbReference>
<dbReference type="SMART" id="SM00487">
    <property type="entry name" value="DEXDc"/>
    <property type="match status" value="1"/>
</dbReference>
<dbReference type="SUPFAM" id="SSF52540">
    <property type="entry name" value="P-loop containing nucleoside triphosphate hydrolases"/>
    <property type="match status" value="2"/>
</dbReference>
<dbReference type="PROSITE" id="PS51192">
    <property type="entry name" value="HELICASE_ATP_BIND_1"/>
    <property type="match status" value="1"/>
</dbReference>
<protein>
    <recommendedName>
        <fullName>Putative helicase 161L</fullName>
        <ecNumber>3.6.4.-</ecNumber>
    </recommendedName>
</protein>
<comment type="similarity">
    <text evidence="2">Belongs to the DEAD box helicase family. DEAH subfamily.</text>
</comment>
<name>VF161_IIV6</name>
<reference key="1">
    <citation type="journal article" date="2001" name="Virology">
        <title>Analysis of the first complete DNA sequence of an invertebrate iridovirus: coding strategy of the genome of Chilo iridescent virus.</title>
        <authorList>
            <person name="Jakob N.J."/>
            <person name="Mueller K."/>
            <person name="Bahr U."/>
            <person name="Darai G."/>
        </authorList>
    </citation>
    <scope>NUCLEOTIDE SEQUENCE [LARGE SCALE GENOMIC DNA]</scope>
</reference>
<reference key="2">
    <citation type="journal article" date="2007" name="Virol. J.">
        <title>Comparative genomic analysis of the family Iridoviridae: re-annotating and defining the core set of iridovirus genes.</title>
        <authorList>
            <person name="Eaton H.E."/>
            <person name="Metcalf J."/>
            <person name="Penny E."/>
            <person name="Tcherepanov V."/>
            <person name="Upton C."/>
            <person name="Brunetti C.R."/>
        </authorList>
    </citation>
    <scope>GENOME REANNOTATION</scope>
</reference>